<reference key="1">
    <citation type="journal article" date="2003" name="Science">
        <title>Genome of Geobacter sulfurreducens: metal reduction in subsurface environments.</title>
        <authorList>
            <person name="Methe B.A."/>
            <person name="Nelson K.E."/>
            <person name="Eisen J.A."/>
            <person name="Paulsen I.T."/>
            <person name="Nelson W.C."/>
            <person name="Heidelberg J.F."/>
            <person name="Wu D."/>
            <person name="Wu M."/>
            <person name="Ward N.L."/>
            <person name="Beanan M.J."/>
            <person name="Dodson R.J."/>
            <person name="Madupu R."/>
            <person name="Brinkac L.M."/>
            <person name="Daugherty S.C."/>
            <person name="DeBoy R.T."/>
            <person name="Durkin A.S."/>
            <person name="Gwinn M.L."/>
            <person name="Kolonay J.F."/>
            <person name="Sullivan S.A."/>
            <person name="Haft D.H."/>
            <person name="Selengut J."/>
            <person name="Davidsen T.M."/>
            <person name="Zafar N."/>
            <person name="White O."/>
            <person name="Tran B."/>
            <person name="Romero C."/>
            <person name="Forberger H.A."/>
            <person name="Weidman J.F."/>
            <person name="Khouri H.M."/>
            <person name="Feldblyum T.V."/>
            <person name="Utterback T.R."/>
            <person name="Van Aken S.E."/>
            <person name="Lovley D.R."/>
            <person name="Fraser C.M."/>
        </authorList>
    </citation>
    <scope>NUCLEOTIDE SEQUENCE [LARGE SCALE GENOMIC DNA]</scope>
    <source>
        <strain>ATCC 51573 / DSM 12127 / PCA</strain>
    </source>
</reference>
<gene>
    <name evidence="1" type="primary">rbfA</name>
    <name type="ordered locus">GSU1589</name>
</gene>
<protein>
    <recommendedName>
        <fullName evidence="1">Ribosome-binding factor A</fullName>
    </recommendedName>
</protein>
<feature type="chain" id="PRO_0000102666" description="Ribosome-binding factor A">
    <location>
        <begin position="1"/>
        <end position="118"/>
    </location>
</feature>
<name>RBFA_GEOSL</name>
<comment type="function">
    <text evidence="1">One of several proteins that assist in the late maturation steps of the functional core of the 30S ribosomal subunit. Associates with free 30S ribosomal subunits (but not with 30S subunits that are part of 70S ribosomes or polysomes). Required for efficient processing of 16S rRNA. May interact with the 5'-terminal helix region of 16S rRNA.</text>
</comment>
<comment type="subunit">
    <text evidence="1">Monomer. Binds 30S ribosomal subunits, but not 50S ribosomal subunits or 70S ribosomes.</text>
</comment>
<comment type="subcellular location">
    <subcellularLocation>
        <location evidence="1">Cytoplasm</location>
    </subcellularLocation>
</comment>
<comment type="similarity">
    <text evidence="1">Belongs to the RbfA family.</text>
</comment>
<accession>Q74CT2</accession>
<evidence type="ECO:0000255" key="1">
    <source>
        <dbReference type="HAMAP-Rule" id="MF_00003"/>
    </source>
</evidence>
<keyword id="KW-0963">Cytoplasm</keyword>
<keyword id="KW-1185">Reference proteome</keyword>
<keyword id="KW-0690">Ribosome biogenesis</keyword>
<sequence>MFNRSEKVAEAIHELVSGLIVKGMKDPRIGFITITGVKVTDDIRQATIYYTVMGDDEARVSTARGLASATGFLRREIGKQLRLKFAPELHFKYDQSIEYGNRIDQLLKEIETEKGSDD</sequence>
<proteinExistence type="inferred from homology"/>
<dbReference type="EMBL" id="AE017180">
    <property type="protein sequence ID" value="AAR34963.1"/>
    <property type="molecule type" value="Genomic_DNA"/>
</dbReference>
<dbReference type="RefSeq" id="NP_952640.1">
    <property type="nucleotide sequence ID" value="NC_002939.5"/>
</dbReference>
<dbReference type="RefSeq" id="WP_010942234.1">
    <property type="nucleotide sequence ID" value="NC_002939.5"/>
</dbReference>
<dbReference type="SMR" id="Q74CT2"/>
<dbReference type="FunCoup" id="Q74CT2">
    <property type="interactions" value="492"/>
</dbReference>
<dbReference type="STRING" id="243231.GSU1589"/>
<dbReference type="EnsemblBacteria" id="AAR34963">
    <property type="protein sequence ID" value="AAR34963"/>
    <property type="gene ID" value="GSU1589"/>
</dbReference>
<dbReference type="KEGG" id="gsu:GSU1589"/>
<dbReference type="PATRIC" id="fig|243231.5.peg.1630"/>
<dbReference type="eggNOG" id="COG0858">
    <property type="taxonomic scope" value="Bacteria"/>
</dbReference>
<dbReference type="HOGENOM" id="CLU_089475_6_3_7"/>
<dbReference type="InParanoid" id="Q74CT2"/>
<dbReference type="OrthoDB" id="307788at2"/>
<dbReference type="Proteomes" id="UP000000577">
    <property type="component" value="Chromosome"/>
</dbReference>
<dbReference type="GO" id="GO:0005829">
    <property type="term" value="C:cytosol"/>
    <property type="evidence" value="ECO:0000318"/>
    <property type="project" value="GO_Central"/>
</dbReference>
<dbReference type="GO" id="GO:0043024">
    <property type="term" value="F:ribosomal small subunit binding"/>
    <property type="evidence" value="ECO:0000318"/>
    <property type="project" value="GO_Central"/>
</dbReference>
<dbReference type="GO" id="GO:0030490">
    <property type="term" value="P:maturation of SSU-rRNA"/>
    <property type="evidence" value="ECO:0007669"/>
    <property type="project" value="UniProtKB-UniRule"/>
</dbReference>
<dbReference type="GO" id="GO:0042254">
    <property type="term" value="P:ribosome biogenesis"/>
    <property type="evidence" value="ECO:0000318"/>
    <property type="project" value="GO_Central"/>
</dbReference>
<dbReference type="Gene3D" id="3.30.300.20">
    <property type="match status" value="1"/>
</dbReference>
<dbReference type="HAMAP" id="MF_00003">
    <property type="entry name" value="RbfA"/>
    <property type="match status" value="1"/>
</dbReference>
<dbReference type="InterPro" id="IPR015946">
    <property type="entry name" value="KH_dom-like_a/b"/>
</dbReference>
<dbReference type="InterPro" id="IPR000238">
    <property type="entry name" value="RbfA"/>
</dbReference>
<dbReference type="InterPro" id="IPR023799">
    <property type="entry name" value="RbfA_dom_sf"/>
</dbReference>
<dbReference type="InterPro" id="IPR020053">
    <property type="entry name" value="Ribosome-bd_factorA_CS"/>
</dbReference>
<dbReference type="NCBIfam" id="NF010388">
    <property type="entry name" value="PRK13815.1"/>
    <property type="match status" value="1"/>
</dbReference>
<dbReference type="NCBIfam" id="TIGR00082">
    <property type="entry name" value="rbfA"/>
    <property type="match status" value="1"/>
</dbReference>
<dbReference type="PANTHER" id="PTHR33515">
    <property type="entry name" value="RIBOSOME-BINDING FACTOR A, CHLOROPLASTIC-RELATED"/>
    <property type="match status" value="1"/>
</dbReference>
<dbReference type="PANTHER" id="PTHR33515:SF1">
    <property type="entry name" value="RIBOSOME-BINDING FACTOR A, CHLOROPLASTIC-RELATED"/>
    <property type="match status" value="1"/>
</dbReference>
<dbReference type="Pfam" id="PF02033">
    <property type="entry name" value="RBFA"/>
    <property type="match status" value="1"/>
</dbReference>
<dbReference type="SUPFAM" id="SSF89919">
    <property type="entry name" value="Ribosome-binding factor A, RbfA"/>
    <property type="match status" value="1"/>
</dbReference>
<dbReference type="PROSITE" id="PS01319">
    <property type="entry name" value="RBFA"/>
    <property type="match status" value="1"/>
</dbReference>
<organism>
    <name type="scientific">Geobacter sulfurreducens (strain ATCC 51573 / DSM 12127 / PCA)</name>
    <dbReference type="NCBI Taxonomy" id="243231"/>
    <lineage>
        <taxon>Bacteria</taxon>
        <taxon>Pseudomonadati</taxon>
        <taxon>Thermodesulfobacteriota</taxon>
        <taxon>Desulfuromonadia</taxon>
        <taxon>Geobacterales</taxon>
        <taxon>Geobacteraceae</taxon>
        <taxon>Geobacter</taxon>
    </lineage>
</organism>